<dbReference type="EMBL" id="AJ248287">
    <property type="protein sequence ID" value="CAB50340.1"/>
    <property type="molecule type" value="Genomic_DNA"/>
</dbReference>
<dbReference type="EMBL" id="HE613800">
    <property type="protein sequence ID" value="CCE70881.1"/>
    <property type="molecule type" value="Genomic_DNA"/>
</dbReference>
<dbReference type="PIR" id="G75055">
    <property type="entry name" value="G75055"/>
</dbReference>
<dbReference type="SMR" id="Q9UYS2"/>
<dbReference type="STRING" id="272844.PAB0953"/>
<dbReference type="KEGG" id="pab:PAB0953"/>
<dbReference type="PATRIC" id="fig|272844.11.peg.1526"/>
<dbReference type="eggNOG" id="arCOG00395">
    <property type="taxonomic scope" value="Archaea"/>
</dbReference>
<dbReference type="HOGENOM" id="CLU_830601_0_0_2"/>
<dbReference type="OrthoDB" id="85590at2157"/>
<dbReference type="PhylomeDB" id="Q9UYS2"/>
<dbReference type="Proteomes" id="UP000000810">
    <property type="component" value="Chromosome"/>
</dbReference>
<dbReference type="Proteomes" id="UP000009139">
    <property type="component" value="Chromosome"/>
</dbReference>
<dbReference type="GO" id="GO:0016020">
    <property type="term" value="C:membrane"/>
    <property type="evidence" value="ECO:0007669"/>
    <property type="project" value="UniProtKB-SubCell"/>
</dbReference>
<dbReference type="CDD" id="cd00090">
    <property type="entry name" value="HTH_ARSR"/>
    <property type="match status" value="1"/>
</dbReference>
<dbReference type="Gene3D" id="1.10.10.10">
    <property type="entry name" value="Winged helix-like DNA-binding domain superfamily/Winged helix DNA-binding domain"/>
    <property type="match status" value="1"/>
</dbReference>
<dbReference type="InterPro" id="IPR011991">
    <property type="entry name" value="ArsR-like_HTH"/>
</dbReference>
<dbReference type="InterPro" id="IPR051922">
    <property type="entry name" value="Bact_Sporulation_Assoc"/>
</dbReference>
<dbReference type="InterPro" id="IPR007253">
    <property type="entry name" value="Cell_wall-bd_2"/>
</dbReference>
<dbReference type="InterPro" id="IPR055767">
    <property type="entry name" value="DUF7343"/>
</dbReference>
<dbReference type="InterPro" id="IPR036388">
    <property type="entry name" value="WH-like_DNA-bd_sf"/>
</dbReference>
<dbReference type="InterPro" id="IPR036390">
    <property type="entry name" value="WH_DNA-bd_sf"/>
</dbReference>
<dbReference type="PANTHER" id="PTHR30032:SF4">
    <property type="entry name" value="AMIDASE ENHANCER"/>
    <property type="match status" value="1"/>
</dbReference>
<dbReference type="PANTHER" id="PTHR30032">
    <property type="entry name" value="N-ACETYLMURAMOYL-L-ALANINE AMIDASE-RELATED"/>
    <property type="match status" value="1"/>
</dbReference>
<dbReference type="Pfam" id="PF04122">
    <property type="entry name" value="CW_binding_2"/>
    <property type="match status" value="1"/>
</dbReference>
<dbReference type="Pfam" id="PF24034">
    <property type="entry name" value="DUF7343"/>
    <property type="match status" value="1"/>
</dbReference>
<dbReference type="SUPFAM" id="SSF46785">
    <property type="entry name" value="Winged helix' DNA-binding domain"/>
    <property type="match status" value="1"/>
</dbReference>
<keyword id="KW-0472">Membrane</keyword>
<keyword id="KW-0732">Signal</keyword>
<keyword id="KW-0812">Transmembrane</keyword>
<keyword id="KW-1133">Transmembrane helix</keyword>
<feature type="signal peptide" evidence="1">
    <location>
        <begin position="1"/>
        <end position="23"/>
    </location>
</feature>
<feature type="chain" id="PRO_0000014217" description="Uncharacterized protein PYRAB14350">
    <location>
        <begin position="24"/>
        <end position="333"/>
    </location>
</feature>
<feature type="transmembrane region" description="Helical" evidence="1">
    <location>
        <begin position="232"/>
        <end position="252"/>
    </location>
</feature>
<protein>
    <recommendedName>
        <fullName>Uncharacterized protein PYRAB14350</fullName>
    </recommendedName>
</protein>
<reference key="1">
    <citation type="journal article" date="2003" name="Mol. Microbiol.">
        <title>An integrated analysis of the genome of the hyperthermophilic archaeon Pyrococcus abyssi.</title>
        <authorList>
            <person name="Cohen G.N."/>
            <person name="Barbe V."/>
            <person name="Flament D."/>
            <person name="Galperin M."/>
            <person name="Heilig R."/>
            <person name="Lecompte O."/>
            <person name="Poch O."/>
            <person name="Prieur D."/>
            <person name="Querellou J."/>
            <person name="Ripp R."/>
            <person name="Thierry J.-C."/>
            <person name="Van der Oost J."/>
            <person name="Weissenbach J."/>
            <person name="Zivanovic Y."/>
            <person name="Forterre P."/>
        </authorList>
    </citation>
    <scope>NUCLEOTIDE SEQUENCE [LARGE SCALE GENOMIC DNA]</scope>
    <source>
        <strain>GE5 / Orsay</strain>
    </source>
</reference>
<reference key="2">
    <citation type="journal article" date="2012" name="Curr. Microbiol.">
        <title>Re-annotation of two hyperthermophilic archaea Pyrococcus abyssi GE5 and Pyrococcus furiosus DSM 3638.</title>
        <authorList>
            <person name="Gao J."/>
            <person name="Wang J."/>
        </authorList>
    </citation>
    <scope>GENOME REANNOTATION</scope>
    <source>
        <strain>GE5 / Orsay</strain>
    </source>
</reference>
<comment type="subcellular location">
    <subcellularLocation>
        <location evidence="2">Membrane</location>
        <topology evidence="2">Single-pass membrane protein</topology>
    </subcellularLocation>
</comment>
<organism>
    <name type="scientific">Pyrococcus abyssi (strain GE5 / Orsay)</name>
    <dbReference type="NCBI Taxonomy" id="272844"/>
    <lineage>
        <taxon>Archaea</taxon>
        <taxon>Methanobacteriati</taxon>
        <taxon>Methanobacteriota</taxon>
        <taxon>Thermococci</taxon>
        <taxon>Thermococcales</taxon>
        <taxon>Thermococcaceae</taxon>
        <taxon>Pyrococcus</taxon>
    </lineage>
</organism>
<name>Y1435_PYRAB</name>
<evidence type="ECO:0000255" key="1"/>
<evidence type="ECO:0000305" key="2"/>
<sequence length="333" mass="37599">MSRSFMIILTIMLIALSLGEVLAAENGYDLIIVRNDDLIDYLIALPYSHLLDIPILPVNPKELDDVTKAQLYSYIQLGRDKILIIGNNNAVSLNVEKELEDMGFKVTRIGGADRTETAEKLALHFYPNGSKLVILASAWDYGSTLAASEFAMEYKCPILLTWENQLSPSALEGIKKLNPKIVILVGFGINETVEKTIEDMGYETYWIGRDIEPPPIETTTTTTPNQTSSSKSFFLGVLVTLMILSPVIVYLWKKREERRSQFLEQFSEKEIEVLRAIIENGGEIKQEELPKIVGYSRPTISRIIQDLEKKGIVEREKSGKTFIVRVIKKIKLD</sequence>
<accession>Q9UYS2</accession>
<accession>G8ZIJ8</accession>
<proteinExistence type="inferred from homology"/>
<gene>
    <name type="ordered locus">PYRAB14350</name>
    <name type="ORF">PAB0953</name>
</gene>